<organism>
    <name type="scientific">Zea mays</name>
    <name type="common">Maize</name>
    <dbReference type="NCBI Taxonomy" id="4577"/>
    <lineage>
        <taxon>Eukaryota</taxon>
        <taxon>Viridiplantae</taxon>
        <taxon>Streptophyta</taxon>
        <taxon>Embryophyta</taxon>
        <taxon>Tracheophyta</taxon>
        <taxon>Spermatophyta</taxon>
        <taxon>Magnoliopsida</taxon>
        <taxon>Liliopsida</taxon>
        <taxon>Poales</taxon>
        <taxon>Poaceae</taxon>
        <taxon>PACMAD clade</taxon>
        <taxon>Panicoideae</taxon>
        <taxon>Andropogonodae</taxon>
        <taxon>Andropogoneae</taxon>
        <taxon>Tripsacinae</taxon>
        <taxon>Zea</taxon>
    </lineage>
</organism>
<dbReference type="EMBL" id="CM000785">
    <property type="protein sequence ID" value="AQL05665.1"/>
    <property type="molecule type" value="Genomic_DNA"/>
</dbReference>
<dbReference type="EMBL" id="BT041347">
    <property type="protein sequence ID" value="ACF86352.1"/>
    <property type="status" value="ALT_INIT"/>
    <property type="molecule type" value="mRNA"/>
</dbReference>
<dbReference type="RefSeq" id="NP_001141424.1">
    <property type="nucleotide sequence ID" value="NM_001147952.1"/>
</dbReference>
<dbReference type="SMR" id="K7WCC7"/>
<dbReference type="FunCoup" id="K7WCC7">
    <property type="interactions" value="545"/>
</dbReference>
<dbReference type="STRING" id="4577.K7WCC7"/>
<dbReference type="PaxDb" id="4577-GRMZM2G009070_P01"/>
<dbReference type="EnsemblPlants" id="Zm00001eb391750_T001">
    <property type="protein sequence ID" value="Zm00001eb391750_P001"/>
    <property type="gene ID" value="Zm00001eb391750"/>
</dbReference>
<dbReference type="GeneID" id="100273534"/>
<dbReference type="Gramene" id="Zm00001eb391750_T001">
    <property type="protein sequence ID" value="Zm00001eb391750_P001"/>
    <property type="gene ID" value="Zm00001eb391750"/>
</dbReference>
<dbReference type="KEGG" id="zma:100273534"/>
<dbReference type="eggNOG" id="ENOG502QTHZ">
    <property type="taxonomic scope" value="Eukaryota"/>
</dbReference>
<dbReference type="HOGENOM" id="CLU_022291_4_0_1"/>
<dbReference type="InParanoid" id="K7WCC7"/>
<dbReference type="OMA" id="FLHYDTR"/>
<dbReference type="OrthoDB" id="533138at2759"/>
<dbReference type="Proteomes" id="UP000007305">
    <property type="component" value="Chromosome 9"/>
</dbReference>
<dbReference type="ExpressionAtlas" id="K7WCC7">
    <property type="expression patterns" value="baseline and differential"/>
</dbReference>
<dbReference type="GO" id="GO:0009507">
    <property type="term" value="C:chloroplast"/>
    <property type="evidence" value="ECO:0007669"/>
    <property type="project" value="UniProtKB-SubCell"/>
</dbReference>
<dbReference type="GO" id="GO:0016881">
    <property type="term" value="F:acid-amino acid ligase activity"/>
    <property type="evidence" value="ECO:0007669"/>
    <property type="project" value="InterPro"/>
</dbReference>
<dbReference type="GO" id="GO:0005524">
    <property type="term" value="F:ATP binding"/>
    <property type="evidence" value="ECO:0007669"/>
    <property type="project" value="InterPro"/>
</dbReference>
<dbReference type="GO" id="GO:0009058">
    <property type="term" value="P:biosynthetic process"/>
    <property type="evidence" value="ECO:0007669"/>
    <property type="project" value="InterPro"/>
</dbReference>
<dbReference type="GO" id="GO:0051301">
    <property type="term" value="P:cell division"/>
    <property type="evidence" value="ECO:0007669"/>
    <property type="project" value="InterPro"/>
</dbReference>
<dbReference type="GO" id="GO:0010020">
    <property type="term" value="P:chloroplast fission"/>
    <property type="evidence" value="ECO:0007669"/>
    <property type="project" value="EnsemblPlants"/>
</dbReference>
<dbReference type="GO" id="GO:0008360">
    <property type="term" value="P:regulation of cell shape"/>
    <property type="evidence" value="ECO:0007669"/>
    <property type="project" value="InterPro"/>
</dbReference>
<dbReference type="GO" id="GO:0010468">
    <property type="term" value="P:regulation of gene expression"/>
    <property type="evidence" value="ECO:0000315"/>
    <property type="project" value="UniProtKB"/>
</dbReference>
<dbReference type="FunFam" id="3.40.1190.10:FF:000014">
    <property type="entry name" value="UDP-N-acetylmuramoyl-L-alanyl-D-glutamate--2, 6-diaminopimelate ligase"/>
    <property type="match status" value="1"/>
</dbReference>
<dbReference type="FunFam" id="3.40.1390.10:FF:000003">
    <property type="entry name" value="UDP-N-acetylmuramoyl-L-alanyl-D-glutamate--2, 6-diaminopimelate ligase"/>
    <property type="match status" value="1"/>
</dbReference>
<dbReference type="FunFam" id="3.90.190.20:FF:000006">
    <property type="entry name" value="UDP-N-acetylmuramoyl-L-alanyl-D-glutamate--2,6-diaminopimelate ligase"/>
    <property type="match status" value="1"/>
</dbReference>
<dbReference type="Gene3D" id="3.90.190.20">
    <property type="entry name" value="Mur ligase, C-terminal domain"/>
    <property type="match status" value="1"/>
</dbReference>
<dbReference type="Gene3D" id="3.40.1190.10">
    <property type="entry name" value="Mur-like, catalytic domain"/>
    <property type="match status" value="1"/>
</dbReference>
<dbReference type="Gene3D" id="3.40.1390.10">
    <property type="entry name" value="MurE/MurF, N-terminal domain"/>
    <property type="match status" value="1"/>
</dbReference>
<dbReference type="InterPro" id="IPR036565">
    <property type="entry name" value="Mur-like_cat_sf"/>
</dbReference>
<dbReference type="InterPro" id="IPR004101">
    <property type="entry name" value="Mur_ligase_C"/>
</dbReference>
<dbReference type="InterPro" id="IPR036615">
    <property type="entry name" value="Mur_ligase_C_dom_sf"/>
</dbReference>
<dbReference type="InterPro" id="IPR013221">
    <property type="entry name" value="Mur_ligase_cen"/>
</dbReference>
<dbReference type="InterPro" id="IPR035911">
    <property type="entry name" value="MurE/MurF_N"/>
</dbReference>
<dbReference type="InterPro" id="IPR005761">
    <property type="entry name" value="UDP-N-AcMur-Glu-dNH2Pim_ligase"/>
</dbReference>
<dbReference type="NCBIfam" id="TIGR01085">
    <property type="entry name" value="murE"/>
    <property type="match status" value="1"/>
</dbReference>
<dbReference type="PANTHER" id="PTHR23135">
    <property type="entry name" value="MUR LIGASE FAMILY MEMBER"/>
    <property type="match status" value="1"/>
</dbReference>
<dbReference type="PANTHER" id="PTHR23135:SF4">
    <property type="entry name" value="UDP-N-ACETYLMURAMOYL-L-ALANYL-D-GLUTAMATE--2,6-DIAMINOPIMELATE LIGASE MURE HOMOLOG, CHLOROPLASTIC"/>
    <property type="match status" value="1"/>
</dbReference>
<dbReference type="Pfam" id="PF02875">
    <property type="entry name" value="Mur_ligase_C"/>
    <property type="match status" value="1"/>
</dbReference>
<dbReference type="Pfam" id="PF08245">
    <property type="entry name" value="Mur_ligase_M"/>
    <property type="match status" value="1"/>
</dbReference>
<dbReference type="SUPFAM" id="SSF53623">
    <property type="entry name" value="MurD-like peptide ligases, catalytic domain"/>
    <property type="match status" value="1"/>
</dbReference>
<dbReference type="SUPFAM" id="SSF53244">
    <property type="entry name" value="MurD-like peptide ligases, peptide-binding domain"/>
    <property type="match status" value="1"/>
</dbReference>
<dbReference type="SUPFAM" id="SSF63418">
    <property type="entry name" value="MurE/MurF N-terminal domain"/>
    <property type="match status" value="1"/>
</dbReference>
<name>MURE_MAIZE</name>
<feature type="transit peptide" description="Chloroplast" evidence="1">
    <location>
        <begin position="1"/>
        <end position="59"/>
    </location>
</feature>
<feature type="chain" id="PRO_0000441844" description="UDP-N-acetylmuramoyl-L-alanyl-D-glutamate--2,6-diaminopimelate ligase MurE homolog, chloroplastic">
    <location>
        <begin position="60"/>
        <end position="760"/>
    </location>
</feature>
<feature type="region of interest" description="Disordered" evidence="2">
    <location>
        <begin position="13"/>
        <end position="159"/>
    </location>
</feature>
<feature type="region of interest" description="Disordered" evidence="2">
    <location>
        <begin position="176"/>
        <end position="205"/>
    </location>
</feature>
<feature type="compositionally biased region" description="Pro residues" evidence="2">
    <location>
        <begin position="20"/>
        <end position="34"/>
    </location>
</feature>
<feature type="compositionally biased region" description="Acidic residues" evidence="2">
    <location>
        <begin position="53"/>
        <end position="62"/>
    </location>
</feature>
<feature type="compositionally biased region" description="Basic and acidic residues" evidence="2">
    <location>
        <begin position="118"/>
        <end position="132"/>
    </location>
</feature>
<feature type="compositionally biased region" description="Acidic residues" evidence="2">
    <location>
        <begin position="150"/>
        <end position="159"/>
    </location>
</feature>
<feature type="compositionally biased region" description="Acidic residues" evidence="2">
    <location>
        <begin position="182"/>
        <end position="205"/>
    </location>
</feature>
<reference key="1">
    <citation type="journal article" date="2009" name="Science">
        <title>The B73 maize genome: complexity, diversity, and dynamics.</title>
        <authorList>
            <person name="Schnable P.S."/>
            <person name="Ware D."/>
            <person name="Fulton R.S."/>
            <person name="Stein J.C."/>
            <person name="Wei F."/>
            <person name="Pasternak S."/>
            <person name="Liang C."/>
            <person name="Zhang J."/>
            <person name="Fulton L."/>
            <person name="Graves T.A."/>
            <person name="Minx P."/>
            <person name="Reily A.D."/>
            <person name="Courtney L."/>
            <person name="Kruchowski S.S."/>
            <person name="Tomlinson C."/>
            <person name="Strong C."/>
            <person name="Delehaunty K."/>
            <person name="Fronick C."/>
            <person name="Courtney B."/>
            <person name="Rock S.M."/>
            <person name="Belter E."/>
            <person name="Du F."/>
            <person name="Kim K."/>
            <person name="Abbott R.M."/>
            <person name="Cotton M."/>
            <person name="Levy A."/>
            <person name="Marchetto P."/>
            <person name="Ochoa K."/>
            <person name="Jackson S.M."/>
            <person name="Gillam B."/>
            <person name="Chen W."/>
            <person name="Yan L."/>
            <person name="Higginbotham J."/>
            <person name="Cardenas M."/>
            <person name="Waligorski J."/>
            <person name="Applebaum E."/>
            <person name="Phelps L."/>
            <person name="Falcone J."/>
            <person name="Kanchi K."/>
            <person name="Thane T."/>
            <person name="Scimone A."/>
            <person name="Thane N."/>
            <person name="Henke J."/>
            <person name="Wang T."/>
            <person name="Ruppert J."/>
            <person name="Shah N."/>
            <person name="Rotter K."/>
            <person name="Hodges J."/>
            <person name="Ingenthron E."/>
            <person name="Cordes M."/>
            <person name="Kohlberg S."/>
            <person name="Sgro J."/>
            <person name="Delgado B."/>
            <person name="Mead K."/>
            <person name="Chinwalla A."/>
            <person name="Leonard S."/>
            <person name="Crouse K."/>
            <person name="Collura K."/>
            <person name="Kudrna D."/>
            <person name="Currie J."/>
            <person name="He R."/>
            <person name="Angelova A."/>
            <person name="Rajasekar S."/>
            <person name="Mueller T."/>
            <person name="Lomeli R."/>
            <person name="Scara G."/>
            <person name="Ko A."/>
            <person name="Delaney K."/>
            <person name="Wissotski M."/>
            <person name="Lopez G."/>
            <person name="Campos D."/>
            <person name="Braidotti M."/>
            <person name="Ashley E."/>
            <person name="Golser W."/>
            <person name="Kim H."/>
            <person name="Lee S."/>
            <person name="Lin J."/>
            <person name="Dujmic Z."/>
            <person name="Kim W."/>
            <person name="Talag J."/>
            <person name="Zuccolo A."/>
            <person name="Fan C."/>
            <person name="Sebastian A."/>
            <person name="Kramer M."/>
            <person name="Spiegel L."/>
            <person name="Nascimento L."/>
            <person name="Zutavern T."/>
            <person name="Miller B."/>
            <person name="Ambroise C."/>
            <person name="Muller S."/>
            <person name="Spooner W."/>
            <person name="Narechania A."/>
            <person name="Ren L."/>
            <person name="Wei S."/>
            <person name="Kumari S."/>
            <person name="Faga B."/>
            <person name="Levy M.J."/>
            <person name="McMahan L."/>
            <person name="Van Buren P."/>
            <person name="Vaughn M.W."/>
            <person name="Ying K."/>
            <person name="Yeh C.-T."/>
            <person name="Emrich S.J."/>
            <person name="Jia Y."/>
            <person name="Kalyanaraman A."/>
            <person name="Hsia A.-P."/>
            <person name="Barbazuk W.B."/>
            <person name="Baucom R.S."/>
            <person name="Brutnell T.P."/>
            <person name="Carpita N.C."/>
            <person name="Chaparro C."/>
            <person name="Chia J.-M."/>
            <person name="Deragon J.-M."/>
            <person name="Estill J.C."/>
            <person name="Fu Y."/>
            <person name="Jeddeloh J.A."/>
            <person name="Han Y."/>
            <person name="Lee H."/>
            <person name="Li P."/>
            <person name="Lisch D.R."/>
            <person name="Liu S."/>
            <person name="Liu Z."/>
            <person name="Nagel D.H."/>
            <person name="McCann M.C."/>
            <person name="SanMiguel P."/>
            <person name="Myers A.M."/>
            <person name="Nettleton D."/>
            <person name="Nguyen J."/>
            <person name="Penning B.W."/>
            <person name="Ponnala L."/>
            <person name="Schneider K.L."/>
            <person name="Schwartz D.C."/>
            <person name="Sharma A."/>
            <person name="Soderlund C."/>
            <person name="Springer N.M."/>
            <person name="Sun Q."/>
            <person name="Wang H."/>
            <person name="Waterman M."/>
            <person name="Westerman R."/>
            <person name="Wolfgruber T.K."/>
            <person name="Yang L."/>
            <person name="Yu Y."/>
            <person name="Zhang L."/>
            <person name="Zhou S."/>
            <person name="Zhu Q."/>
            <person name="Bennetzen J.L."/>
            <person name="Dawe R.K."/>
            <person name="Jiang J."/>
            <person name="Jiang N."/>
            <person name="Presting G.G."/>
            <person name="Wessler S.R."/>
            <person name="Aluru S."/>
            <person name="Martienssen R.A."/>
            <person name="Clifton S.W."/>
            <person name="McCombie W.R."/>
            <person name="Wing R.A."/>
            <person name="Wilson R.K."/>
        </authorList>
    </citation>
    <scope>NUCLEOTIDE SEQUENCE [LARGE SCALE GENOMIC DNA]</scope>
    <source>
        <strain>cv. B73</strain>
    </source>
</reference>
<reference key="2">
    <citation type="journal article" date="2009" name="PLoS Genet.">
        <title>Sequencing, mapping, and analysis of 27,455 maize full-length cDNAs.</title>
        <authorList>
            <person name="Soderlund C."/>
            <person name="Descour A."/>
            <person name="Kudrna D."/>
            <person name="Bomhoff M."/>
            <person name="Boyd L."/>
            <person name="Currie J."/>
            <person name="Angelova A."/>
            <person name="Collura K."/>
            <person name="Wissotski M."/>
            <person name="Ashley E."/>
            <person name="Morrow D."/>
            <person name="Fernandes J."/>
            <person name="Walbot V."/>
            <person name="Yu Y."/>
        </authorList>
    </citation>
    <scope>NUCLEOTIDE SEQUENCE [LARGE SCALE MRNA] OF 197-760</scope>
    <source>
        <strain>cv. B73</strain>
    </source>
</reference>
<reference key="3">
    <citation type="journal article" date="2014" name="Plant Physiol.">
        <title>A major role for the plastid-encoded RNA polymerase complex in the expression of plastid transfer RNAs.</title>
        <authorList>
            <person name="Williams-Carrier R."/>
            <person name="Zoschke R."/>
            <person name="Belcher S."/>
            <person name="Pfalz J."/>
            <person name="Barkan A."/>
        </authorList>
    </citation>
    <scope>FUNCTION</scope>
    <scope>DISRUPTION PHENOTYPE</scope>
</reference>
<reference key="4">
    <citation type="journal article" date="2015" name="New Phytol.">
        <title>ZmpTAC12 binds single-stranded nucleic acids and is essential for accumulation of the plastid-encoded polymerase complex in maize.</title>
        <authorList>
            <person name="Pfalz J."/>
            <person name="Holtzegel U."/>
            <person name="Barkan A."/>
            <person name="Weisheit W."/>
            <person name="Mittag M."/>
            <person name="Pfannschmidt T."/>
        </authorList>
    </citation>
    <scope>FUNCTION</scope>
    <scope>IDENTIFICATION BY MASS SPECTROMETRY</scope>
    <scope>SUBUNIT</scope>
</reference>
<accession>K7WCC7</accession>
<accession>B4FW59</accession>
<sequence length="760" mass="82561">MATAPLAFRLPFPFSFPSASRPPPSRILAPPTPRRLPLRLAAAAARRFRPPTADDEPPEAAEDSSHGLTRYDQLARSVERARIRQPEITPDNPLFSSPSTAGGGGGGSYDPDDEFFDEIDRAIAEKREEFTRRGLIKPSPASPPPSQSQPEDEDLTDELSPEEVIDLDEIRKLQGLSVVSVADEEDEEVEGGEDEDDGLPLDEDGEGFDVAEELGLEGARMRQPAFRMTLAELLDESKLVPVAVTGDQDVALAGVQRDASLVAAGDLFVCVGEDGLAGLTEADKRGAVAVVADQDLNIEGTLACRALVIVDDILTALRVLPACLYSRPSMNMAIIGVTGTDGVTTTTHLVKAMYEAMGVRTGLVGVLGTYAFSSNKLDARPDASSDPIAAQKLMATMLHNGTEAVVLEKGTDGMPPSGVDSEIDYDIAVLTNVRHTDEENGMTYEEYMSRMASLFSRMVDPERHRKVVNIDDPSAPFFAAQGGHDVPVVTYSFENKKADVHTLKYQLSLFETEVLVQTPHGILEISSGLLGRDNIYSILATVAVGIAVGAPLEDIVRGIEEVDAIPGRCELIDEEQAFGVIVDHARTPEALSRLLDGVRELGPRRIVTVVGCCGEKERGKRPVMTKIAADKSDVVMLTSDNPANEDPLDILDDMLAGVGWTMEEYLKYGANDYYPPLPNGHRLFLHDIRRVAVRAAVAMGEQGDVVVITGKGNDTYQIEGDKNEFFDDREECREALQYVDQLHRAGIDTSEFPWRLPESH</sequence>
<evidence type="ECO:0000255" key="1"/>
<evidence type="ECO:0000256" key="2">
    <source>
        <dbReference type="SAM" id="MobiDB-lite"/>
    </source>
</evidence>
<evidence type="ECO:0000269" key="3">
    <source>
    </source>
</evidence>
<evidence type="ECO:0000269" key="4">
    <source>
    </source>
</evidence>
<evidence type="ECO:0000303" key="5">
    <source>
    </source>
</evidence>
<evidence type="ECO:0000305" key="6"/>
<evidence type="ECO:0000312" key="7">
    <source>
        <dbReference type="EMBL" id="AQL05665.1"/>
    </source>
</evidence>
<proteinExistence type="evidence at protein level"/>
<protein>
    <recommendedName>
        <fullName evidence="6">UDP-N-acetylmuramoyl-L-alanyl-D-glutamate--2,6-diaminopimelate ligase MurE homolog, chloroplastic</fullName>
        <shortName evidence="5">ZmMURE</shortName>
    </recommendedName>
</protein>
<gene>
    <name evidence="5" type="primary">MURE</name>
    <name evidence="7" type="ORF">ZEAMMB73_Zm00001d047128</name>
</gene>
<keyword id="KW-0150">Chloroplast</keyword>
<keyword id="KW-0934">Plastid</keyword>
<keyword id="KW-1185">Reference proteome</keyword>
<keyword id="KW-0804">Transcription</keyword>
<keyword id="KW-0805">Transcription regulation</keyword>
<keyword id="KW-0809">Transit peptide</keyword>
<comment type="function">
    <text evidence="3 4">Required for the activity of the plastid-encoded RNA polymerase (PEP) and full expression of genes transcribed by PEP (PubMed:24246379). Required for the proper build-up and formation of the PEP-complex (PubMed:25599833).</text>
</comment>
<comment type="subunit">
    <text evidence="4">Component of the plastid-encoded plastid RNA polymerase (PEP) complex.</text>
</comment>
<comment type="subcellular location">
    <subcellularLocation>
        <location evidence="1">Plastid</location>
        <location evidence="1">Chloroplast</location>
    </subcellularLocation>
</comment>
<comment type="disruption phenotype">
    <text evidence="3">Pale yellow-green leaf phenotype. Reduced levels of plastid ribosomes and defects in plastid mRNA metabolism.</text>
</comment>
<comment type="similarity">
    <text evidence="6">Belongs to the MurCDEF family. MurE subfamily.</text>
</comment>
<comment type="sequence caution" evidence="6">
    <conflict type="erroneous initiation">
        <sequence resource="EMBL-CDS" id="ACF86352"/>
    </conflict>
    <text>Truncated N-terminus.</text>
</comment>